<dbReference type="EC" id="1.5.1.5" evidence="1"/>
<dbReference type="EC" id="3.5.4.9" evidence="1"/>
<dbReference type="EMBL" id="CP000607">
    <property type="protein sequence ID" value="ABP36977.1"/>
    <property type="molecule type" value="Genomic_DNA"/>
</dbReference>
<dbReference type="SMR" id="A4SER8"/>
<dbReference type="STRING" id="290318.Cvib_0963"/>
<dbReference type="KEGG" id="pvi:Cvib_0963"/>
<dbReference type="eggNOG" id="COG0190">
    <property type="taxonomic scope" value="Bacteria"/>
</dbReference>
<dbReference type="HOGENOM" id="CLU_034045_2_1_10"/>
<dbReference type="OrthoDB" id="9803580at2"/>
<dbReference type="UniPathway" id="UPA00193"/>
<dbReference type="GO" id="GO:0005829">
    <property type="term" value="C:cytosol"/>
    <property type="evidence" value="ECO:0007669"/>
    <property type="project" value="TreeGrafter"/>
</dbReference>
<dbReference type="GO" id="GO:0004477">
    <property type="term" value="F:methenyltetrahydrofolate cyclohydrolase activity"/>
    <property type="evidence" value="ECO:0007669"/>
    <property type="project" value="UniProtKB-UniRule"/>
</dbReference>
<dbReference type="GO" id="GO:0004488">
    <property type="term" value="F:methylenetetrahydrofolate dehydrogenase (NADP+) activity"/>
    <property type="evidence" value="ECO:0007669"/>
    <property type="project" value="UniProtKB-UniRule"/>
</dbReference>
<dbReference type="GO" id="GO:0000105">
    <property type="term" value="P:L-histidine biosynthetic process"/>
    <property type="evidence" value="ECO:0007669"/>
    <property type="project" value="UniProtKB-KW"/>
</dbReference>
<dbReference type="GO" id="GO:0009086">
    <property type="term" value="P:methionine biosynthetic process"/>
    <property type="evidence" value="ECO:0007669"/>
    <property type="project" value="UniProtKB-KW"/>
</dbReference>
<dbReference type="GO" id="GO:0006164">
    <property type="term" value="P:purine nucleotide biosynthetic process"/>
    <property type="evidence" value="ECO:0007669"/>
    <property type="project" value="UniProtKB-KW"/>
</dbReference>
<dbReference type="GO" id="GO:0035999">
    <property type="term" value="P:tetrahydrofolate interconversion"/>
    <property type="evidence" value="ECO:0007669"/>
    <property type="project" value="UniProtKB-UniRule"/>
</dbReference>
<dbReference type="CDD" id="cd01080">
    <property type="entry name" value="NAD_bind_m-THF_DH_Cyclohyd"/>
    <property type="match status" value="1"/>
</dbReference>
<dbReference type="FunFam" id="3.40.50.720:FF:000189">
    <property type="entry name" value="Bifunctional protein FolD"/>
    <property type="match status" value="1"/>
</dbReference>
<dbReference type="FunFam" id="3.40.50.10860:FF:000005">
    <property type="entry name" value="C-1-tetrahydrofolate synthase, cytoplasmic, putative"/>
    <property type="match status" value="1"/>
</dbReference>
<dbReference type="Gene3D" id="3.40.50.10860">
    <property type="entry name" value="Leucine Dehydrogenase, chain A, domain 1"/>
    <property type="match status" value="1"/>
</dbReference>
<dbReference type="Gene3D" id="3.40.50.720">
    <property type="entry name" value="NAD(P)-binding Rossmann-like Domain"/>
    <property type="match status" value="1"/>
</dbReference>
<dbReference type="HAMAP" id="MF_01576">
    <property type="entry name" value="THF_DHG_CYH"/>
    <property type="match status" value="1"/>
</dbReference>
<dbReference type="InterPro" id="IPR046346">
    <property type="entry name" value="Aminoacid_DH-like_N_sf"/>
</dbReference>
<dbReference type="InterPro" id="IPR036291">
    <property type="entry name" value="NAD(P)-bd_dom_sf"/>
</dbReference>
<dbReference type="InterPro" id="IPR000672">
    <property type="entry name" value="THF_DH/CycHdrlase"/>
</dbReference>
<dbReference type="InterPro" id="IPR020630">
    <property type="entry name" value="THF_DH/CycHdrlase_cat_dom"/>
</dbReference>
<dbReference type="InterPro" id="IPR020867">
    <property type="entry name" value="THF_DH/CycHdrlase_CS"/>
</dbReference>
<dbReference type="InterPro" id="IPR020631">
    <property type="entry name" value="THF_DH/CycHdrlase_NAD-bd_dom"/>
</dbReference>
<dbReference type="NCBIfam" id="NF010771">
    <property type="entry name" value="PRK14174.1"/>
    <property type="match status" value="1"/>
</dbReference>
<dbReference type="NCBIfam" id="NF010783">
    <property type="entry name" value="PRK14186.1"/>
    <property type="match status" value="1"/>
</dbReference>
<dbReference type="PANTHER" id="PTHR48099:SF5">
    <property type="entry name" value="C-1-TETRAHYDROFOLATE SYNTHASE, CYTOPLASMIC"/>
    <property type="match status" value="1"/>
</dbReference>
<dbReference type="PANTHER" id="PTHR48099">
    <property type="entry name" value="C-1-TETRAHYDROFOLATE SYNTHASE, CYTOPLASMIC-RELATED"/>
    <property type="match status" value="1"/>
</dbReference>
<dbReference type="Pfam" id="PF00763">
    <property type="entry name" value="THF_DHG_CYH"/>
    <property type="match status" value="1"/>
</dbReference>
<dbReference type="Pfam" id="PF02882">
    <property type="entry name" value="THF_DHG_CYH_C"/>
    <property type="match status" value="1"/>
</dbReference>
<dbReference type="PRINTS" id="PR00085">
    <property type="entry name" value="THFDHDRGNASE"/>
</dbReference>
<dbReference type="SUPFAM" id="SSF53223">
    <property type="entry name" value="Aminoacid dehydrogenase-like, N-terminal domain"/>
    <property type="match status" value="1"/>
</dbReference>
<dbReference type="SUPFAM" id="SSF51735">
    <property type="entry name" value="NAD(P)-binding Rossmann-fold domains"/>
    <property type="match status" value="1"/>
</dbReference>
<dbReference type="PROSITE" id="PS00767">
    <property type="entry name" value="THF_DHG_CYH_2"/>
    <property type="match status" value="1"/>
</dbReference>
<name>FOLD_CHLPM</name>
<protein>
    <recommendedName>
        <fullName evidence="1">Bifunctional protein FolD</fullName>
    </recommendedName>
    <domain>
        <recommendedName>
            <fullName evidence="1">Methylenetetrahydrofolate dehydrogenase</fullName>
            <ecNumber evidence="1">1.5.1.5</ecNumber>
        </recommendedName>
    </domain>
    <domain>
        <recommendedName>
            <fullName evidence="1">Methenyltetrahydrofolate cyclohydrolase</fullName>
            <ecNumber evidence="1">3.5.4.9</ecNumber>
        </recommendedName>
    </domain>
</protein>
<organism>
    <name type="scientific">Chlorobium phaeovibrioides (strain DSM 265 / 1930)</name>
    <name type="common">Prosthecochloris vibrioformis (strain DSM 265)</name>
    <dbReference type="NCBI Taxonomy" id="290318"/>
    <lineage>
        <taxon>Bacteria</taxon>
        <taxon>Pseudomonadati</taxon>
        <taxon>Chlorobiota</taxon>
        <taxon>Chlorobiia</taxon>
        <taxon>Chlorobiales</taxon>
        <taxon>Chlorobiaceae</taxon>
        <taxon>Chlorobium/Pelodictyon group</taxon>
        <taxon>Chlorobium</taxon>
    </lineage>
</organism>
<proteinExistence type="inferred from homology"/>
<gene>
    <name evidence="1" type="primary">folD</name>
    <name type="ordered locus">Cvib_0963</name>
</gene>
<comment type="function">
    <text evidence="1">Catalyzes the oxidation of 5,10-methylenetetrahydrofolate to 5,10-methenyltetrahydrofolate and then the hydrolysis of 5,10-methenyltetrahydrofolate to 10-formyltetrahydrofolate.</text>
</comment>
<comment type="catalytic activity">
    <reaction evidence="1">
        <text>(6R)-5,10-methylene-5,6,7,8-tetrahydrofolate + NADP(+) = (6R)-5,10-methenyltetrahydrofolate + NADPH</text>
        <dbReference type="Rhea" id="RHEA:22812"/>
        <dbReference type="ChEBI" id="CHEBI:15636"/>
        <dbReference type="ChEBI" id="CHEBI:57455"/>
        <dbReference type="ChEBI" id="CHEBI:57783"/>
        <dbReference type="ChEBI" id="CHEBI:58349"/>
        <dbReference type="EC" id="1.5.1.5"/>
    </reaction>
</comment>
<comment type="catalytic activity">
    <reaction evidence="1">
        <text>(6R)-5,10-methenyltetrahydrofolate + H2O = (6R)-10-formyltetrahydrofolate + H(+)</text>
        <dbReference type="Rhea" id="RHEA:23700"/>
        <dbReference type="ChEBI" id="CHEBI:15377"/>
        <dbReference type="ChEBI" id="CHEBI:15378"/>
        <dbReference type="ChEBI" id="CHEBI:57455"/>
        <dbReference type="ChEBI" id="CHEBI:195366"/>
        <dbReference type="EC" id="3.5.4.9"/>
    </reaction>
</comment>
<comment type="pathway">
    <text evidence="1">One-carbon metabolism; tetrahydrofolate interconversion.</text>
</comment>
<comment type="subunit">
    <text evidence="1">Homodimer.</text>
</comment>
<comment type="similarity">
    <text evidence="1">Belongs to the tetrahydrofolate dehydrogenase/cyclohydrolase family.</text>
</comment>
<sequence length="295" mass="31856">MLIIDGKKVSLELKDELKASVDRYRETTGKVPGLTVIIVGEDPASQVYVRNKAKTCKEIGMNSSVITMPADTPEEHLLDTIASLNLDPAVHGILVQQPLPEQIDEFAVTLAIDPQKDVDGFHPENLGRLVMGHLDKCFVSCTPYGILELLGRYGIETSGKHCVVVGRSNIVGKPMANLMLQKLKRSNCTVTICHSATQDIASYTRQADILIAAIGRAKFITPDMVKEGAVVIDVGINRIDDPTTKSGTRLVGDVDYEGVSALASAMTPVPGGVGPMTIAMLLKNTLHSFERTHNL</sequence>
<accession>A4SER8</accession>
<keyword id="KW-0028">Amino-acid biosynthesis</keyword>
<keyword id="KW-0368">Histidine biosynthesis</keyword>
<keyword id="KW-0378">Hydrolase</keyword>
<keyword id="KW-0486">Methionine biosynthesis</keyword>
<keyword id="KW-0511">Multifunctional enzyme</keyword>
<keyword id="KW-0521">NADP</keyword>
<keyword id="KW-0554">One-carbon metabolism</keyword>
<keyword id="KW-0560">Oxidoreductase</keyword>
<keyword id="KW-0658">Purine biosynthesis</keyword>
<feature type="chain" id="PRO_1000087911" description="Bifunctional protein FolD">
    <location>
        <begin position="1"/>
        <end position="295"/>
    </location>
</feature>
<feature type="binding site" evidence="1">
    <location>
        <begin position="166"/>
        <end position="168"/>
    </location>
    <ligand>
        <name>NADP(+)</name>
        <dbReference type="ChEBI" id="CHEBI:58349"/>
    </ligand>
</feature>
<feature type="binding site" evidence="1">
    <location>
        <position position="195"/>
    </location>
    <ligand>
        <name>NADP(+)</name>
        <dbReference type="ChEBI" id="CHEBI:58349"/>
    </ligand>
</feature>
<feature type="binding site" evidence="1">
    <location>
        <position position="236"/>
    </location>
    <ligand>
        <name>NADP(+)</name>
        <dbReference type="ChEBI" id="CHEBI:58349"/>
    </ligand>
</feature>
<evidence type="ECO:0000255" key="1">
    <source>
        <dbReference type="HAMAP-Rule" id="MF_01576"/>
    </source>
</evidence>
<reference key="1">
    <citation type="submission" date="2007-03" db="EMBL/GenBank/DDBJ databases">
        <title>Complete sequence of Prosthecochloris vibrioformis DSM 265.</title>
        <authorList>
            <consortium name="US DOE Joint Genome Institute"/>
            <person name="Copeland A."/>
            <person name="Lucas S."/>
            <person name="Lapidus A."/>
            <person name="Barry K."/>
            <person name="Detter J.C."/>
            <person name="Glavina del Rio T."/>
            <person name="Hammon N."/>
            <person name="Israni S."/>
            <person name="Pitluck S."/>
            <person name="Schmutz J."/>
            <person name="Larimer F."/>
            <person name="Land M."/>
            <person name="Hauser L."/>
            <person name="Mikhailova N."/>
            <person name="Li T."/>
            <person name="Overmann J."/>
            <person name="Schuster S.C."/>
            <person name="Bryant D.A."/>
            <person name="Richardson P."/>
        </authorList>
    </citation>
    <scope>NUCLEOTIDE SEQUENCE [LARGE SCALE GENOMIC DNA]</scope>
    <source>
        <strain>DSM 265 / 1930</strain>
    </source>
</reference>